<reference key="1">
    <citation type="journal article" date="2002" name="Lancet">
        <title>Genome and virulence determinants of high virulence community-acquired MRSA.</title>
        <authorList>
            <person name="Baba T."/>
            <person name="Takeuchi F."/>
            <person name="Kuroda M."/>
            <person name="Yuzawa H."/>
            <person name="Aoki K."/>
            <person name="Oguchi A."/>
            <person name="Nagai Y."/>
            <person name="Iwama N."/>
            <person name="Asano K."/>
            <person name="Naimi T."/>
            <person name="Kuroda H."/>
            <person name="Cui L."/>
            <person name="Yamamoto K."/>
            <person name="Hiramatsu K."/>
        </authorList>
    </citation>
    <scope>NUCLEOTIDE SEQUENCE [LARGE SCALE GENOMIC DNA]</scope>
    <source>
        <strain>MW2</strain>
    </source>
</reference>
<accession>P60683</accession>
<accession>Q9ZNG4</accession>
<comment type="function">
    <text evidence="1">Mnh complex is a Na(+)/H(+) antiporter involved in Na(+) excretion.</text>
</comment>
<comment type="subunit">
    <text evidence="1">May form a heterooligomeric complex that consists of seven subunits: mnhA1, mnhB1, mnhC1, mnhD1, mnhE1, mnhF1 and mnhG1.</text>
</comment>
<comment type="subcellular location">
    <subcellularLocation>
        <location evidence="3">Cell membrane</location>
        <topology evidence="3">Multi-pass membrane protein</topology>
    </subcellularLocation>
</comment>
<comment type="similarity">
    <text evidence="3">Belongs to the CPA3 antiporters (TC 2.A.63) subunit C family.</text>
</comment>
<proteinExistence type="inferred from homology"/>
<dbReference type="EMBL" id="BA000033">
    <property type="protein sequence ID" value="BAB94697.1"/>
    <property type="molecule type" value="Genomic_DNA"/>
</dbReference>
<dbReference type="PIR" id="G89861">
    <property type="entry name" value="G89861"/>
</dbReference>
<dbReference type="RefSeq" id="WP_000402803.1">
    <property type="nucleotide sequence ID" value="NC_003923.1"/>
</dbReference>
<dbReference type="SMR" id="P60683"/>
<dbReference type="GeneID" id="98345271"/>
<dbReference type="KEGG" id="sam:MW0832"/>
<dbReference type="HOGENOM" id="CLU_082058_3_1_9"/>
<dbReference type="GO" id="GO:0005886">
    <property type="term" value="C:plasma membrane"/>
    <property type="evidence" value="ECO:0007669"/>
    <property type="project" value="UniProtKB-SubCell"/>
</dbReference>
<dbReference type="GO" id="GO:0015297">
    <property type="term" value="F:antiporter activity"/>
    <property type="evidence" value="ECO:0007669"/>
    <property type="project" value="UniProtKB-KW"/>
</dbReference>
<dbReference type="GO" id="GO:0008324">
    <property type="term" value="F:monoatomic cation transmembrane transporter activity"/>
    <property type="evidence" value="ECO:0007669"/>
    <property type="project" value="InterPro"/>
</dbReference>
<dbReference type="GO" id="GO:1902600">
    <property type="term" value="P:proton transmembrane transport"/>
    <property type="evidence" value="ECO:0007669"/>
    <property type="project" value="UniProtKB-KW"/>
</dbReference>
<dbReference type="GO" id="GO:0006814">
    <property type="term" value="P:sodium ion transport"/>
    <property type="evidence" value="ECO:0007669"/>
    <property type="project" value="UniProtKB-KW"/>
</dbReference>
<dbReference type="Gene3D" id="1.10.287.3510">
    <property type="match status" value="1"/>
</dbReference>
<dbReference type="InterPro" id="IPR050601">
    <property type="entry name" value="CPA3_antiporter_subunitC"/>
</dbReference>
<dbReference type="InterPro" id="IPR006673">
    <property type="entry name" value="Mnh_C1_su"/>
</dbReference>
<dbReference type="InterPro" id="IPR039428">
    <property type="entry name" value="NUOK/Mnh_C1-like"/>
</dbReference>
<dbReference type="NCBIfam" id="TIGR00941">
    <property type="entry name" value="2a6301s03"/>
    <property type="match status" value="1"/>
</dbReference>
<dbReference type="NCBIfam" id="NF006372">
    <property type="entry name" value="PRK08600.1"/>
    <property type="match status" value="1"/>
</dbReference>
<dbReference type="NCBIfam" id="NF006573">
    <property type="entry name" value="PRK09094.1"/>
    <property type="match status" value="1"/>
</dbReference>
<dbReference type="NCBIfam" id="NF009303">
    <property type="entry name" value="PRK12660.1"/>
    <property type="match status" value="1"/>
</dbReference>
<dbReference type="PANTHER" id="PTHR34583">
    <property type="entry name" value="ANTIPORTER SUBUNIT MNHC2-RELATED"/>
    <property type="match status" value="1"/>
</dbReference>
<dbReference type="PANTHER" id="PTHR34583:SF2">
    <property type="entry name" value="ANTIPORTER SUBUNIT MNHC2-RELATED"/>
    <property type="match status" value="1"/>
</dbReference>
<dbReference type="Pfam" id="PF00420">
    <property type="entry name" value="Oxidored_q2"/>
    <property type="match status" value="1"/>
</dbReference>
<gene>
    <name type="primary">mnhC1</name>
    <name type="ordered locus">MW0832</name>
</gene>
<organism>
    <name type="scientific">Staphylococcus aureus (strain MW2)</name>
    <dbReference type="NCBI Taxonomy" id="196620"/>
    <lineage>
        <taxon>Bacteria</taxon>
        <taxon>Bacillati</taxon>
        <taxon>Bacillota</taxon>
        <taxon>Bacilli</taxon>
        <taxon>Bacillales</taxon>
        <taxon>Staphylococcaceae</taxon>
        <taxon>Staphylococcus</taxon>
    </lineage>
</organism>
<evidence type="ECO:0000250" key="1"/>
<evidence type="ECO:0000255" key="2"/>
<evidence type="ECO:0000305" key="3"/>
<feature type="chain" id="PRO_0000089153" description="Na(+)/H(+) antiporter subunit C1">
    <location>
        <begin position="1"/>
        <end position="113"/>
    </location>
</feature>
<feature type="transmembrane region" description="Helical" evidence="2">
    <location>
        <begin position="4"/>
        <end position="21"/>
    </location>
</feature>
<feature type="transmembrane region" description="Helical" evidence="2">
    <location>
        <begin position="26"/>
        <end position="48"/>
    </location>
</feature>
<feature type="transmembrane region" description="Helical" evidence="2">
    <location>
        <begin position="68"/>
        <end position="90"/>
    </location>
</feature>
<name>MNHC1_STAAW</name>
<keyword id="KW-0050">Antiport</keyword>
<keyword id="KW-1003">Cell membrane</keyword>
<keyword id="KW-0375">Hydrogen ion transport</keyword>
<keyword id="KW-0406">Ion transport</keyword>
<keyword id="KW-0472">Membrane</keyword>
<keyword id="KW-0915">Sodium</keyword>
<keyword id="KW-0739">Sodium transport</keyword>
<keyword id="KW-0812">Transmembrane</keyword>
<keyword id="KW-1133">Transmembrane helix</keyword>
<keyword id="KW-0813">Transport</keyword>
<protein>
    <recommendedName>
        <fullName>Na(+)/H(+) antiporter subunit C1</fullName>
    </recommendedName>
    <alternativeName>
        <fullName>Mnh complex subunit C1</fullName>
    </alternativeName>
</protein>
<sequence>MEIIMIFVSGILTAISVYLVLSKSLIRIVMGTTLLTHAANLFLITMGGLKHGTVPIYEANVKSYVDPIPQALILTAIVIAFATTAFFLVLAFRTYKELGTDNVESMKGVPEDD</sequence>